<sequence>MTKLLQIIASPRGGDSKSNALADAFVAAQRAKDSTLQVDHLDLWAEDLPAFDGDPAAAKMTFFGVGQMDPSKEQAWSAVARITERFMSADHVVMGVPMWNGGIPYRLKHYIDIITQPGMLFGFDPDNGYSGLLRNRKATVVTTSGVWSEGADARFGSDFHSTYLKWWFETIGITDVTFVRYQPSLLTDDPQAGYDRALAALTAA</sequence>
<name>AZOR_RUEPO</name>
<evidence type="ECO:0000255" key="1">
    <source>
        <dbReference type="HAMAP-Rule" id="MF_01216"/>
    </source>
</evidence>
<dbReference type="EC" id="1.6.5.-" evidence="1"/>
<dbReference type="EC" id="1.7.1.17" evidence="1"/>
<dbReference type="EMBL" id="CP000031">
    <property type="protein sequence ID" value="AAV93701.1"/>
    <property type="molecule type" value="Genomic_DNA"/>
</dbReference>
<dbReference type="RefSeq" id="WP_011046144.1">
    <property type="nucleotide sequence ID" value="NC_003911.12"/>
</dbReference>
<dbReference type="SMR" id="Q5LXG9"/>
<dbReference type="STRING" id="246200.SPO0383"/>
<dbReference type="PaxDb" id="246200-SPO0383"/>
<dbReference type="KEGG" id="sil:SPO0383"/>
<dbReference type="eggNOG" id="COG1182">
    <property type="taxonomic scope" value="Bacteria"/>
</dbReference>
<dbReference type="HOGENOM" id="CLU_088964_1_0_5"/>
<dbReference type="OrthoDB" id="9787136at2"/>
<dbReference type="Proteomes" id="UP000001023">
    <property type="component" value="Chromosome"/>
</dbReference>
<dbReference type="GO" id="GO:0009055">
    <property type="term" value="F:electron transfer activity"/>
    <property type="evidence" value="ECO:0007669"/>
    <property type="project" value="UniProtKB-UniRule"/>
</dbReference>
<dbReference type="GO" id="GO:0010181">
    <property type="term" value="F:FMN binding"/>
    <property type="evidence" value="ECO:0007669"/>
    <property type="project" value="UniProtKB-UniRule"/>
</dbReference>
<dbReference type="GO" id="GO:0016652">
    <property type="term" value="F:oxidoreductase activity, acting on NAD(P)H as acceptor"/>
    <property type="evidence" value="ECO:0007669"/>
    <property type="project" value="UniProtKB-UniRule"/>
</dbReference>
<dbReference type="GO" id="GO:0016655">
    <property type="term" value="F:oxidoreductase activity, acting on NAD(P)H, quinone or similar compound as acceptor"/>
    <property type="evidence" value="ECO:0007669"/>
    <property type="project" value="InterPro"/>
</dbReference>
<dbReference type="Gene3D" id="3.40.50.360">
    <property type="match status" value="1"/>
</dbReference>
<dbReference type="HAMAP" id="MF_01216">
    <property type="entry name" value="Azoreductase_type1"/>
    <property type="match status" value="1"/>
</dbReference>
<dbReference type="InterPro" id="IPR003680">
    <property type="entry name" value="Flavodoxin_fold"/>
</dbReference>
<dbReference type="InterPro" id="IPR029039">
    <property type="entry name" value="Flavoprotein-like_sf"/>
</dbReference>
<dbReference type="InterPro" id="IPR050104">
    <property type="entry name" value="FMN-dep_NADH:Q_OxRdtase_AzoR1"/>
</dbReference>
<dbReference type="InterPro" id="IPR023048">
    <property type="entry name" value="NADH:quinone_OxRdtase_FMN_depd"/>
</dbReference>
<dbReference type="PANTHER" id="PTHR43741">
    <property type="entry name" value="FMN-DEPENDENT NADH-AZOREDUCTASE 1"/>
    <property type="match status" value="1"/>
</dbReference>
<dbReference type="PANTHER" id="PTHR43741:SF4">
    <property type="entry name" value="FMN-DEPENDENT NADH:QUINONE OXIDOREDUCTASE"/>
    <property type="match status" value="1"/>
</dbReference>
<dbReference type="Pfam" id="PF02525">
    <property type="entry name" value="Flavodoxin_2"/>
    <property type="match status" value="1"/>
</dbReference>
<dbReference type="SUPFAM" id="SSF52218">
    <property type="entry name" value="Flavoproteins"/>
    <property type="match status" value="1"/>
</dbReference>
<reference key="1">
    <citation type="journal article" date="2004" name="Nature">
        <title>Genome sequence of Silicibacter pomeroyi reveals adaptations to the marine environment.</title>
        <authorList>
            <person name="Moran M.A."/>
            <person name="Buchan A."/>
            <person name="Gonzalez J.M."/>
            <person name="Heidelberg J.F."/>
            <person name="Whitman W.B."/>
            <person name="Kiene R.P."/>
            <person name="Henriksen J.R."/>
            <person name="King G.M."/>
            <person name="Belas R."/>
            <person name="Fuqua C."/>
            <person name="Brinkac L.M."/>
            <person name="Lewis M."/>
            <person name="Johri S."/>
            <person name="Weaver B."/>
            <person name="Pai G."/>
            <person name="Eisen J.A."/>
            <person name="Rahe E."/>
            <person name="Sheldon W.M."/>
            <person name="Ye W."/>
            <person name="Miller T.R."/>
            <person name="Carlton J."/>
            <person name="Rasko D.A."/>
            <person name="Paulsen I.T."/>
            <person name="Ren Q."/>
            <person name="Daugherty S.C."/>
            <person name="DeBoy R.T."/>
            <person name="Dodson R.J."/>
            <person name="Durkin A.S."/>
            <person name="Madupu R."/>
            <person name="Nelson W.C."/>
            <person name="Sullivan S.A."/>
            <person name="Rosovitz M.J."/>
            <person name="Haft D.H."/>
            <person name="Selengut J."/>
            <person name="Ward N."/>
        </authorList>
    </citation>
    <scope>NUCLEOTIDE SEQUENCE [LARGE SCALE GENOMIC DNA]</scope>
    <source>
        <strain>ATCC 700808 / DSM 15171 / DSS-3</strain>
    </source>
</reference>
<reference key="2">
    <citation type="journal article" date="2014" name="Stand. Genomic Sci.">
        <title>An updated genome annotation for the model marine bacterium Ruegeria pomeroyi DSS-3.</title>
        <authorList>
            <person name="Rivers A.R."/>
            <person name="Smith C.B."/>
            <person name="Moran M.A."/>
        </authorList>
    </citation>
    <scope>GENOME REANNOTATION</scope>
    <source>
        <strain>ATCC 700808 / DSM 15171 / DSS-3</strain>
    </source>
</reference>
<proteinExistence type="inferred from homology"/>
<organism>
    <name type="scientific">Ruegeria pomeroyi (strain ATCC 700808 / DSM 15171 / DSS-3)</name>
    <name type="common">Silicibacter pomeroyi</name>
    <dbReference type="NCBI Taxonomy" id="246200"/>
    <lineage>
        <taxon>Bacteria</taxon>
        <taxon>Pseudomonadati</taxon>
        <taxon>Pseudomonadota</taxon>
        <taxon>Alphaproteobacteria</taxon>
        <taxon>Rhodobacterales</taxon>
        <taxon>Roseobacteraceae</taxon>
        <taxon>Ruegeria</taxon>
    </lineage>
</organism>
<feature type="chain" id="PRO_0000245973" description="FMN-dependent NADH:quinone oxidoreductase">
    <location>
        <begin position="1"/>
        <end position="204"/>
    </location>
</feature>
<feature type="binding site" evidence="1">
    <location>
        <position position="10"/>
    </location>
    <ligand>
        <name>FMN</name>
        <dbReference type="ChEBI" id="CHEBI:58210"/>
    </ligand>
</feature>
<feature type="binding site" evidence="1">
    <location>
        <begin position="16"/>
        <end position="18"/>
    </location>
    <ligand>
        <name>FMN</name>
        <dbReference type="ChEBI" id="CHEBI:58210"/>
    </ligand>
</feature>
<accession>Q5LXG9</accession>
<protein>
    <recommendedName>
        <fullName evidence="1">FMN-dependent NADH:quinone oxidoreductase</fullName>
        <ecNumber evidence="1">1.6.5.-</ecNumber>
    </recommendedName>
    <alternativeName>
        <fullName evidence="1">Azo-dye reductase</fullName>
    </alternativeName>
    <alternativeName>
        <fullName evidence="1">FMN-dependent NADH-azo compound oxidoreductase</fullName>
    </alternativeName>
    <alternativeName>
        <fullName evidence="1">FMN-dependent NADH-azoreductase</fullName>
        <ecNumber evidence="1">1.7.1.17</ecNumber>
    </alternativeName>
</protein>
<comment type="function">
    <text evidence="1">Quinone reductase that provides resistance to thiol-specific stress caused by electrophilic quinones.</text>
</comment>
<comment type="function">
    <text evidence="1">Also exhibits azoreductase activity. Catalyzes the reductive cleavage of the azo bond in aromatic azo compounds to the corresponding amines.</text>
</comment>
<comment type="catalytic activity">
    <reaction evidence="1">
        <text>2 a quinone + NADH + H(+) = 2 a 1,4-benzosemiquinone + NAD(+)</text>
        <dbReference type="Rhea" id="RHEA:65952"/>
        <dbReference type="ChEBI" id="CHEBI:15378"/>
        <dbReference type="ChEBI" id="CHEBI:57540"/>
        <dbReference type="ChEBI" id="CHEBI:57945"/>
        <dbReference type="ChEBI" id="CHEBI:132124"/>
        <dbReference type="ChEBI" id="CHEBI:134225"/>
    </reaction>
</comment>
<comment type="catalytic activity">
    <reaction evidence="1">
        <text>N,N-dimethyl-1,4-phenylenediamine + anthranilate + 2 NAD(+) = 2-(4-dimethylaminophenyl)diazenylbenzoate + 2 NADH + 2 H(+)</text>
        <dbReference type="Rhea" id="RHEA:55872"/>
        <dbReference type="ChEBI" id="CHEBI:15378"/>
        <dbReference type="ChEBI" id="CHEBI:15783"/>
        <dbReference type="ChEBI" id="CHEBI:16567"/>
        <dbReference type="ChEBI" id="CHEBI:57540"/>
        <dbReference type="ChEBI" id="CHEBI:57945"/>
        <dbReference type="ChEBI" id="CHEBI:71579"/>
        <dbReference type="EC" id="1.7.1.17"/>
    </reaction>
</comment>
<comment type="cofactor">
    <cofactor evidence="1">
        <name>FMN</name>
        <dbReference type="ChEBI" id="CHEBI:58210"/>
    </cofactor>
    <text evidence="1">Binds 1 FMN per subunit.</text>
</comment>
<comment type="subunit">
    <text evidence="1">Homodimer.</text>
</comment>
<comment type="similarity">
    <text evidence="1">Belongs to the azoreductase type 1 family.</text>
</comment>
<keyword id="KW-0285">Flavoprotein</keyword>
<keyword id="KW-0288">FMN</keyword>
<keyword id="KW-0520">NAD</keyword>
<keyword id="KW-0560">Oxidoreductase</keyword>
<keyword id="KW-1185">Reference proteome</keyword>
<gene>
    <name evidence="1" type="primary">azoR</name>
    <name type="ordered locus">SPO0383</name>
</gene>